<accession>P35484</accession>
<sequence length="336" mass="35996">MSKEYEIIIVGGGPGGYVAAIKAAQYGAKVALVEKEVVGGICLNHGCIPTKTFLKSAKVFNTVKKSMDFGVSTSGEVGFDWSKIVSRKDGVVKQLTNGVAFLLKKNGVDVYNGFGDIKSANEVVVNGESLKTKNVIIATGSSAVVPPIPGVKEAYEKGIVVTSRELLNVKNYPKSIVIVGGGVIGVEFATVFNSFGSKVTIIEMMDGILPTMDDDIRVAYAKTLKRDGIEILTKAEVKKVDDHKVTYSLDGKETTIEGDLILMSVGTRANSKGLEHLGLEMDRANIKTNEYLQTNVPGVYAIGDVNGKFMLAHVAEHEGITAVQHILKIGHAKMNY</sequence>
<gene>
    <name type="primary">pdhD</name>
</gene>
<feature type="chain" id="PRO_0000068012" description="Dihydrolipoyl dehydrogenase">
    <location>
        <begin position="1"/>
        <end position="336" status="greater than"/>
    </location>
</feature>
<feature type="binding site" evidence="1">
    <location>
        <begin position="34"/>
        <end position="42"/>
    </location>
    <ligand>
        <name>FAD</name>
        <dbReference type="ChEBI" id="CHEBI:57692"/>
    </ligand>
</feature>
<feature type="binding site" evidence="1">
    <location>
        <position position="51"/>
    </location>
    <ligand>
        <name>FAD</name>
        <dbReference type="ChEBI" id="CHEBI:57692"/>
    </ligand>
</feature>
<feature type="binding site" evidence="1">
    <location>
        <position position="115"/>
    </location>
    <ligand>
        <name>FAD</name>
        <dbReference type="ChEBI" id="CHEBI:57692"/>
    </ligand>
</feature>
<feature type="binding site" evidence="1">
    <location>
        <begin position="180"/>
        <end position="184"/>
    </location>
    <ligand>
        <name>NAD(+)</name>
        <dbReference type="ChEBI" id="CHEBI:57540"/>
    </ligand>
</feature>
<feature type="binding site" evidence="1">
    <location>
        <position position="203"/>
    </location>
    <ligand>
        <name>NAD(+)</name>
        <dbReference type="ChEBI" id="CHEBI:57540"/>
    </ligand>
</feature>
<feature type="binding site" evidence="1">
    <location>
        <position position="237"/>
    </location>
    <ligand>
        <name>NAD(+)</name>
        <dbReference type="ChEBI" id="CHEBI:57540"/>
    </ligand>
</feature>
<feature type="binding site" evidence="1">
    <location>
        <begin position="264"/>
        <end position="267"/>
    </location>
    <ligand>
        <name>NAD(+)</name>
        <dbReference type="ChEBI" id="CHEBI:57540"/>
    </ligand>
</feature>
<feature type="binding site" evidence="1">
    <location>
        <position position="304"/>
    </location>
    <ligand>
        <name>FAD</name>
        <dbReference type="ChEBI" id="CHEBI:57692"/>
    </ligand>
</feature>
<feature type="binding site" evidence="1">
    <location>
        <position position="312"/>
    </location>
    <ligand>
        <name>FAD</name>
        <dbReference type="ChEBI" id="CHEBI:57692"/>
    </ligand>
</feature>
<feature type="disulfide bond" description="Redox-active" evidence="1">
    <location>
        <begin position="42"/>
        <end position="47"/>
    </location>
</feature>
<feature type="non-terminal residue">
    <location>
        <position position="336"/>
    </location>
</feature>
<reference key="1">
    <citation type="journal article" date="1992" name="J. Bacteriol.">
        <title>Identification and analysis of the genes coding for the putative pyruvate dehydrogenase enzyme complex in Acholeplasma laidlawii.</title>
        <authorList>
            <person name="Wallbrandt P."/>
            <person name="Tegman V."/>
            <person name="Jonsson B.-H."/>
            <person name="Wieslander A."/>
        </authorList>
    </citation>
    <scope>NUCLEOTIDE SEQUENCE [GENOMIC DNA]</scope>
</reference>
<name>DLDH_ACHLA</name>
<organism>
    <name type="scientific">Acholeplasma laidlawii</name>
    <dbReference type="NCBI Taxonomy" id="2148"/>
    <lineage>
        <taxon>Bacteria</taxon>
        <taxon>Bacillati</taxon>
        <taxon>Mycoplasmatota</taxon>
        <taxon>Mollicutes</taxon>
        <taxon>Acholeplasmatales</taxon>
        <taxon>Acholeplasmataceae</taxon>
        <taxon>Acholeplasma</taxon>
    </lineage>
</organism>
<comment type="function">
    <text>Lipoamide dehydrogenase is a component of the alpha-ketoacid dehydrogenase complexes.</text>
</comment>
<comment type="catalytic activity">
    <reaction>
        <text>N(6)-[(R)-dihydrolipoyl]-L-lysyl-[protein] + NAD(+) = N(6)-[(R)-lipoyl]-L-lysyl-[protein] + NADH + H(+)</text>
        <dbReference type="Rhea" id="RHEA:15045"/>
        <dbReference type="Rhea" id="RHEA-COMP:10474"/>
        <dbReference type="Rhea" id="RHEA-COMP:10475"/>
        <dbReference type="ChEBI" id="CHEBI:15378"/>
        <dbReference type="ChEBI" id="CHEBI:57540"/>
        <dbReference type="ChEBI" id="CHEBI:57945"/>
        <dbReference type="ChEBI" id="CHEBI:83099"/>
        <dbReference type="ChEBI" id="CHEBI:83100"/>
        <dbReference type="EC" id="1.8.1.4"/>
    </reaction>
</comment>
<comment type="cofactor">
    <cofactor evidence="1">
        <name>FAD</name>
        <dbReference type="ChEBI" id="CHEBI:57692"/>
    </cofactor>
    <text evidence="1">Binds 1 FAD per subunit.</text>
</comment>
<comment type="subunit">
    <text evidence="1">Homodimer.</text>
</comment>
<comment type="subcellular location">
    <subcellularLocation>
        <location>Cytoplasm</location>
    </subcellularLocation>
</comment>
<comment type="miscellaneous">
    <text>The active site is a redox-active disulfide bond.</text>
</comment>
<comment type="similarity">
    <text evidence="2">Belongs to the class-I pyridine nucleotide-disulfide oxidoreductase family.</text>
</comment>
<proteinExistence type="inferred from homology"/>
<dbReference type="EC" id="1.8.1.4"/>
<dbReference type="EMBL" id="M81753">
    <property type="protein sequence ID" value="AAA21910.1"/>
    <property type="molecule type" value="Genomic_DNA"/>
</dbReference>
<dbReference type="PIR" id="D42653">
    <property type="entry name" value="D42653"/>
</dbReference>
<dbReference type="SMR" id="P35484"/>
<dbReference type="GO" id="GO:0005737">
    <property type="term" value="C:cytoplasm"/>
    <property type="evidence" value="ECO:0007669"/>
    <property type="project" value="UniProtKB-SubCell"/>
</dbReference>
<dbReference type="GO" id="GO:0004148">
    <property type="term" value="F:dihydrolipoyl dehydrogenase (NADH) activity"/>
    <property type="evidence" value="ECO:0007669"/>
    <property type="project" value="UniProtKB-EC"/>
</dbReference>
<dbReference type="GO" id="GO:0050660">
    <property type="term" value="F:flavin adenine dinucleotide binding"/>
    <property type="evidence" value="ECO:0007669"/>
    <property type="project" value="TreeGrafter"/>
</dbReference>
<dbReference type="GO" id="GO:0006103">
    <property type="term" value="P:2-oxoglutarate metabolic process"/>
    <property type="evidence" value="ECO:0007669"/>
    <property type="project" value="TreeGrafter"/>
</dbReference>
<dbReference type="Gene3D" id="3.50.50.60">
    <property type="entry name" value="FAD/NAD(P)-binding domain"/>
    <property type="match status" value="2"/>
</dbReference>
<dbReference type="InterPro" id="IPR050151">
    <property type="entry name" value="Class-I_Pyr_Nuc-Dis_Oxidored"/>
</dbReference>
<dbReference type="InterPro" id="IPR036188">
    <property type="entry name" value="FAD/NAD-bd_sf"/>
</dbReference>
<dbReference type="InterPro" id="IPR023753">
    <property type="entry name" value="FAD/NAD-binding_dom"/>
</dbReference>
<dbReference type="InterPro" id="IPR012999">
    <property type="entry name" value="Pyr_OxRdtase_I_AS"/>
</dbReference>
<dbReference type="PANTHER" id="PTHR22912:SF217">
    <property type="entry name" value="DIHYDROLIPOYL DEHYDROGENASE"/>
    <property type="match status" value="1"/>
</dbReference>
<dbReference type="PANTHER" id="PTHR22912">
    <property type="entry name" value="DISULFIDE OXIDOREDUCTASE"/>
    <property type="match status" value="1"/>
</dbReference>
<dbReference type="Pfam" id="PF07992">
    <property type="entry name" value="Pyr_redox_2"/>
    <property type="match status" value="1"/>
</dbReference>
<dbReference type="PRINTS" id="PR00368">
    <property type="entry name" value="FADPNR"/>
</dbReference>
<dbReference type="PRINTS" id="PR00411">
    <property type="entry name" value="PNDRDTASEI"/>
</dbReference>
<dbReference type="SUPFAM" id="SSF51905">
    <property type="entry name" value="FAD/NAD(P)-binding domain"/>
    <property type="match status" value="1"/>
</dbReference>
<dbReference type="PROSITE" id="PS00076">
    <property type="entry name" value="PYRIDINE_REDOX_1"/>
    <property type="match status" value="1"/>
</dbReference>
<protein>
    <recommendedName>
        <fullName>Dihydrolipoyl dehydrogenase</fullName>
        <ecNumber>1.8.1.4</ecNumber>
    </recommendedName>
    <alternativeName>
        <fullName>Dihydrolipoamide dehydrogenase</fullName>
    </alternativeName>
    <alternativeName>
        <fullName>E3 component of pyruvate complex</fullName>
    </alternativeName>
</protein>
<keyword id="KW-0963">Cytoplasm</keyword>
<keyword id="KW-1015">Disulfide bond</keyword>
<keyword id="KW-0274">FAD</keyword>
<keyword id="KW-0285">Flavoprotein</keyword>
<keyword id="KW-0520">NAD</keyword>
<keyword id="KW-0560">Oxidoreductase</keyword>
<keyword id="KW-0676">Redox-active center</keyword>
<evidence type="ECO:0000250" key="1"/>
<evidence type="ECO:0000305" key="2"/>